<sequence length="63" mass="7132">MNRALILTFVLFFALFAISSAVNVENDFSSPVSQFCATLSELKCWINNICFWSTADKKCKPLH</sequence>
<feature type="signal peptide" evidence="1">
    <location>
        <begin position="1"/>
        <end position="21"/>
    </location>
</feature>
<feature type="chain" id="PRO_0000344434" description="Uncharacterized protein DDB_G0292360">
    <location>
        <begin position="22"/>
        <end position="63"/>
    </location>
</feature>
<evidence type="ECO:0000255" key="1"/>
<name>Y9734_DICDI</name>
<organism>
    <name type="scientific">Dictyostelium discoideum</name>
    <name type="common">Social amoeba</name>
    <dbReference type="NCBI Taxonomy" id="44689"/>
    <lineage>
        <taxon>Eukaryota</taxon>
        <taxon>Amoebozoa</taxon>
        <taxon>Evosea</taxon>
        <taxon>Eumycetozoa</taxon>
        <taxon>Dictyostelia</taxon>
        <taxon>Dictyosteliales</taxon>
        <taxon>Dictyosteliaceae</taxon>
        <taxon>Dictyostelium</taxon>
    </lineage>
</organism>
<protein>
    <recommendedName>
        <fullName>Uncharacterized protein DDB_G0292360</fullName>
    </recommendedName>
</protein>
<accession>Q54DD5</accession>
<dbReference type="EMBL" id="AAFI02000189">
    <property type="protein sequence ID" value="EAL61304.1"/>
    <property type="molecule type" value="Genomic_DNA"/>
</dbReference>
<dbReference type="RefSeq" id="XP_629706.1">
    <property type="nucleotide sequence ID" value="XM_629704.1"/>
</dbReference>
<dbReference type="FunCoup" id="Q54DD5">
    <property type="interactions" value="877"/>
</dbReference>
<dbReference type="PaxDb" id="44689-DDB0219734"/>
<dbReference type="EnsemblProtists" id="EAL61304">
    <property type="protein sequence ID" value="EAL61304"/>
    <property type="gene ID" value="DDB_G0292360"/>
</dbReference>
<dbReference type="GeneID" id="8628620"/>
<dbReference type="KEGG" id="ddi:DDB_G0292360"/>
<dbReference type="dictyBase" id="DDB_G0292360"/>
<dbReference type="VEuPathDB" id="AmoebaDB:DDB_G0292360"/>
<dbReference type="HOGENOM" id="CLU_2890481_0_0_1"/>
<dbReference type="InParanoid" id="Q54DD5"/>
<dbReference type="PRO" id="PR:Q54DD5"/>
<dbReference type="Proteomes" id="UP000002195">
    <property type="component" value="Chromosome 6"/>
</dbReference>
<gene>
    <name type="ORF">DDB_G0292360</name>
</gene>
<proteinExistence type="inferred from homology"/>
<reference key="1">
    <citation type="journal article" date="2005" name="Nature">
        <title>The genome of the social amoeba Dictyostelium discoideum.</title>
        <authorList>
            <person name="Eichinger L."/>
            <person name="Pachebat J.A."/>
            <person name="Gloeckner G."/>
            <person name="Rajandream M.A."/>
            <person name="Sucgang R."/>
            <person name="Berriman M."/>
            <person name="Song J."/>
            <person name="Olsen R."/>
            <person name="Szafranski K."/>
            <person name="Xu Q."/>
            <person name="Tunggal B."/>
            <person name="Kummerfeld S."/>
            <person name="Madera M."/>
            <person name="Konfortov B.A."/>
            <person name="Rivero F."/>
            <person name="Bankier A.T."/>
            <person name="Lehmann R."/>
            <person name="Hamlin N."/>
            <person name="Davies R."/>
            <person name="Gaudet P."/>
            <person name="Fey P."/>
            <person name="Pilcher K."/>
            <person name="Chen G."/>
            <person name="Saunders D."/>
            <person name="Sodergren E.J."/>
            <person name="Davis P."/>
            <person name="Kerhornou A."/>
            <person name="Nie X."/>
            <person name="Hall N."/>
            <person name="Anjard C."/>
            <person name="Hemphill L."/>
            <person name="Bason N."/>
            <person name="Farbrother P."/>
            <person name="Desany B."/>
            <person name="Just E."/>
            <person name="Morio T."/>
            <person name="Rost R."/>
            <person name="Churcher C.M."/>
            <person name="Cooper J."/>
            <person name="Haydock S."/>
            <person name="van Driessche N."/>
            <person name="Cronin A."/>
            <person name="Goodhead I."/>
            <person name="Muzny D.M."/>
            <person name="Mourier T."/>
            <person name="Pain A."/>
            <person name="Lu M."/>
            <person name="Harper D."/>
            <person name="Lindsay R."/>
            <person name="Hauser H."/>
            <person name="James K.D."/>
            <person name="Quiles M."/>
            <person name="Madan Babu M."/>
            <person name="Saito T."/>
            <person name="Buchrieser C."/>
            <person name="Wardroper A."/>
            <person name="Felder M."/>
            <person name="Thangavelu M."/>
            <person name="Johnson D."/>
            <person name="Knights A."/>
            <person name="Loulseged H."/>
            <person name="Mungall K.L."/>
            <person name="Oliver K."/>
            <person name="Price C."/>
            <person name="Quail M.A."/>
            <person name="Urushihara H."/>
            <person name="Hernandez J."/>
            <person name="Rabbinowitsch E."/>
            <person name="Steffen D."/>
            <person name="Sanders M."/>
            <person name="Ma J."/>
            <person name="Kohara Y."/>
            <person name="Sharp S."/>
            <person name="Simmonds M.N."/>
            <person name="Spiegler S."/>
            <person name="Tivey A."/>
            <person name="Sugano S."/>
            <person name="White B."/>
            <person name="Walker D."/>
            <person name="Woodward J.R."/>
            <person name="Winckler T."/>
            <person name="Tanaka Y."/>
            <person name="Shaulsky G."/>
            <person name="Schleicher M."/>
            <person name="Weinstock G.M."/>
            <person name="Rosenthal A."/>
            <person name="Cox E.C."/>
            <person name="Chisholm R.L."/>
            <person name="Gibbs R.A."/>
            <person name="Loomis W.F."/>
            <person name="Platzer M."/>
            <person name="Kay R.R."/>
            <person name="Williams J.G."/>
            <person name="Dear P.H."/>
            <person name="Noegel A.A."/>
            <person name="Barrell B.G."/>
            <person name="Kuspa A."/>
        </authorList>
    </citation>
    <scope>NUCLEOTIDE SEQUENCE [LARGE SCALE GENOMIC DNA]</scope>
    <source>
        <strain>AX4</strain>
    </source>
</reference>
<keyword id="KW-1185">Reference proteome</keyword>
<keyword id="KW-0732">Signal</keyword>